<reference key="1">
    <citation type="journal article" date="1986" name="Proc. Natl. Acad. Sci. U.S.A.">
        <title>Gene encoding the sigma 37 species of RNA polymerase sigma factor from Bacillus subtilis.</title>
        <authorList>
            <person name="Binnie C."/>
            <person name="Lampe M."/>
            <person name="Losick R."/>
        </authorList>
    </citation>
    <scope>NUCLEOTIDE SEQUENCE [GENOMIC DNA]</scope>
</reference>
<reference key="2">
    <citation type="journal article" date="1987" name="J. Bacteriol.">
        <title>Gene encoding the 37,000-dalton minor sigma factor of Bacillus subtilis RNA polymerase: isolation, nucleotide sequence, chromosomal locus, and cryptic function.</title>
        <authorList>
            <person name="Duncan M.L."/>
            <person name="Kalman S.S."/>
            <person name="Thomas S.M."/>
            <person name="Price C.W."/>
        </authorList>
    </citation>
    <scope>NUCLEOTIDE SEQUENCE [GENOMIC DNA]</scope>
    <source>
        <strain>168</strain>
    </source>
</reference>
<reference key="3">
    <citation type="journal article" date="1990" name="J. Bacteriol.">
        <title>Similar organization of the sigB and spoIIA operons encoding alternate sigma factors of Bacillus subtilis RNA polymerase.</title>
        <authorList>
            <person name="Kalman S."/>
            <person name="Duncan M.L."/>
            <person name="Thomas S.M."/>
            <person name="Price C.W."/>
        </authorList>
    </citation>
    <scope>NUCLEOTIDE SEQUENCE [GENOMIC DNA]</scope>
    <source>
        <strain>168</strain>
    </source>
</reference>
<reference key="4">
    <citation type="submission" date="1997-03" db="EMBL/GenBank/DDBJ databases">
        <title>A 148 kbp sequence of the region between 35 and 47 degree of the Bacillus subtilis genome.</title>
        <authorList>
            <person name="Kasahara Y."/>
            <person name="Nakai S."/>
            <person name="Lee S."/>
            <person name="Sadaie Y."/>
            <person name="Ogasawara N."/>
        </authorList>
    </citation>
    <scope>NUCLEOTIDE SEQUENCE [GENOMIC DNA]</scope>
    <source>
        <strain>168</strain>
    </source>
</reference>
<reference key="5">
    <citation type="journal article" date="1997" name="Nature">
        <title>The complete genome sequence of the Gram-positive bacterium Bacillus subtilis.</title>
        <authorList>
            <person name="Kunst F."/>
            <person name="Ogasawara N."/>
            <person name="Moszer I."/>
            <person name="Albertini A.M."/>
            <person name="Alloni G."/>
            <person name="Azevedo V."/>
            <person name="Bertero M.G."/>
            <person name="Bessieres P."/>
            <person name="Bolotin A."/>
            <person name="Borchert S."/>
            <person name="Borriss R."/>
            <person name="Boursier L."/>
            <person name="Brans A."/>
            <person name="Braun M."/>
            <person name="Brignell S.C."/>
            <person name="Bron S."/>
            <person name="Brouillet S."/>
            <person name="Bruschi C.V."/>
            <person name="Caldwell B."/>
            <person name="Capuano V."/>
            <person name="Carter N.M."/>
            <person name="Choi S.-K."/>
            <person name="Codani J.-J."/>
            <person name="Connerton I.F."/>
            <person name="Cummings N.J."/>
            <person name="Daniel R.A."/>
            <person name="Denizot F."/>
            <person name="Devine K.M."/>
            <person name="Duesterhoeft A."/>
            <person name="Ehrlich S.D."/>
            <person name="Emmerson P.T."/>
            <person name="Entian K.-D."/>
            <person name="Errington J."/>
            <person name="Fabret C."/>
            <person name="Ferrari E."/>
            <person name="Foulger D."/>
            <person name="Fritz C."/>
            <person name="Fujita M."/>
            <person name="Fujita Y."/>
            <person name="Fuma S."/>
            <person name="Galizzi A."/>
            <person name="Galleron N."/>
            <person name="Ghim S.-Y."/>
            <person name="Glaser P."/>
            <person name="Goffeau A."/>
            <person name="Golightly E.J."/>
            <person name="Grandi G."/>
            <person name="Guiseppi G."/>
            <person name="Guy B.J."/>
            <person name="Haga K."/>
            <person name="Haiech J."/>
            <person name="Harwood C.R."/>
            <person name="Henaut A."/>
            <person name="Hilbert H."/>
            <person name="Holsappel S."/>
            <person name="Hosono S."/>
            <person name="Hullo M.-F."/>
            <person name="Itaya M."/>
            <person name="Jones L.-M."/>
            <person name="Joris B."/>
            <person name="Karamata D."/>
            <person name="Kasahara Y."/>
            <person name="Klaerr-Blanchard M."/>
            <person name="Klein C."/>
            <person name="Kobayashi Y."/>
            <person name="Koetter P."/>
            <person name="Koningstein G."/>
            <person name="Krogh S."/>
            <person name="Kumano M."/>
            <person name="Kurita K."/>
            <person name="Lapidus A."/>
            <person name="Lardinois S."/>
            <person name="Lauber J."/>
            <person name="Lazarevic V."/>
            <person name="Lee S.-M."/>
            <person name="Levine A."/>
            <person name="Liu H."/>
            <person name="Masuda S."/>
            <person name="Mauel C."/>
            <person name="Medigue C."/>
            <person name="Medina N."/>
            <person name="Mellado R.P."/>
            <person name="Mizuno M."/>
            <person name="Moestl D."/>
            <person name="Nakai S."/>
            <person name="Noback M."/>
            <person name="Noone D."/>
            <person name="O'Reilly M."/>
            <person name="Ogawa K."/>
            <person name="Ogiwara A."/>
            <person name="Oudega B."/>
            <person name="Park S.-H."/>
            <person name="Parro V."/>
            <person name="Pohl T.M."/>
            <person name="Portetelle D."/>
            <person name="Porwollik S."/>
            <person name="Prescott A.M."/>
            <person name="Presecan E."/>
            <person name="Pujic P."/>
            <person name="Purnelle B."/>
            <person name="Rapoport G."/>
            <person name="Rey M."/>
            <person name="Reynolds S."/>
            <person name="Rieger M."/>
            <person name="Rivolta C."/>
            <person name="Rocha E."/>
            <person name="Roche B."/>
            <person name="Rose M."/>
            <person name="Sadaie Y."/>
            <person name="Sato T."/>
            <person name="Scanlan E."/>
            <person name="Schleich S."/>
            <person name="Schroeter R."/>
            <person name="Scoffone F."/>
            <person name="Sekiguchi J."/>
            <person name="Sekowska A."/>
            <person name="Seror S.J."/>
            <person name="Serror P."/>
            <person name="Shin B.-S."/>
            <person name="Soldo B."/>
            <person name="Sorokin A."/>
            <person name="Tacconi E."/>
            <person name="Takagi T."/>
            <person name="Takahashi H."/>
            <person name="Takemaru K."/>
            <person name="Takeuchi M."/>
            <person name="Tamakoshi A."/>
            <person name="Tanaka T."/>
            <person name="Terpstra P."/>
            <person name="Tognoni A."/>
            <person name="Tosato V."/>
            <person name="Uchiyama S."/>
            <person name="Vandenbol M."/>
            <person name="Vannier F."/>
            <person name="Vassarotti A."/>
            <person name="Viari A."/>
            <person name="Wambutt R."/>
            <person name="Wedler E."/>
            <person name="Wedler H."/>
            <person name="Weitzenegger T."/>
            <person name="Winters P."/>
            <person name="Wipat A."/>
            <person name="Yamamoto H."/>
            <person name="Yamane K."/>
            <person name="Yasumoto K."/>
            <person name="Yata K."/>
            <person name="Yoshida K."/>
            <person name="Yoshikawa H.-F."/>
            <person name="Zumstein E."/>
            <person name="Yoshikawa H."/>
            <person name="Danchin A."/>
        </authorList>
    </citation>
    <scope>NUCLEOTIDE SEQUENCE [LARGE SCALE GENOMIC DNA]</scope>
    <source>
        <strain>168</strain>
    </source>
</reference>
<reference key="6">
    <citation type="journal article" date="1997" name="Electrophoresis">
        <title>First steps from a two-dimensional protein index towards a response-regulation map for Bacillus subtilis.</title>
        <authorList>
            <person name="Antelmann H."/>
            <person name="Bernhardt J."/>
            <person name="Schmid R."/>
            <person name="Mach H."/>
            <person name="Voelker U."/>
            <person name="Hecker M."/>
        </authorList>
    </citation>
    <scope>PROTEIN SEQUENCE OF 2-22</scope>
    <source>
        <strain>168 / IS58</strain>
    </source>
</reference>
<reference key="7">
    <citation type="journal article" date="2011" name="Proteomics">
        <title>The dynamic protein partnership of RNA polymerase in Bacillus subtilis.</title>
        <authorList>
            <person name="Delumeau O."/>
            <person name="Lecointe F."/>
            <person name="Muntel J."/>
            <person name="Guillot A."/>
            <person name="Guedon E."/>
            <person name="Monnet V."/>
            <person name="Hecker M."/>
            <person name="Becher D."/>
            <person name="Polard P."/>
            <person name="Noirot P."/>
        </authorList>
    </citation>
    <scope>FUNCTION</scope>
    <scope>SUBUNIT</scope>
    <scope>INDUCTION</scope>
    <source>
        <strain>168</strain>
    </source>
</reference>
<name>RPSB_BACSU</name>
<organism>
    <name type="scientific">Bacillus subtilis (strain 168)</name>
    <dbReference type="NCBI Taxonomy" id="224308"/>
    <lineage>
        <taxon>Bacteria</taxon>
        <taxon>Bacillati</taxon>
        <taxon>Bacillota</taxon>
        <taxon>Bacilli</taxon>
        <taxon>Bacillales</taxon>
        <taxon>Bacillaceae</taxon>
        <taxon>Bacillus</taxon>
    </lineage>
</organism>
<comment type="function">
    <text evidence="2">Sigma factors are initiation factors that promote the attachment of RNA polymerase (RNAP) to specific initiation sites and are then released. Sigma B is not essential for sporulation; rather it is required for maximal expression of ctc and csbA which are transcribed in the early stationary phase under conditions inimical to sporulation. May play a role in the ability of the bacterium to adapt to various stresses but is not essential for its survival under these conditions. Positively regulates expression of its own operon. The second most abundant sigma factor, it associates with RNAP core under all growth phases (PubMed:21710567).</text>
</comment>
<comment type="subunit">
    <text evidence="5">Interacts transiently with the RNAP core.</text>
</comment>
<comment type="induction">
    <text evidence="2">By heat shock, salt stress, oxidative stress, glucose limitation, oxygen limitation and entry into stationary phase. Association with RNAP core increases during alcohol, NaOH, NaCl stress and during sporulation (at protein level) (PubMed:21710567).</text>
</comment>
<comment type="similarity">
    <text evidence="4">Belongs to the sigma-70 factor family. SigB subfamily.</text>
</comment>
<comment type="sequence caution" evidence="4">
    <conflict type="erroneous initiation">
        <sequence resource="EMBL-CDS" id="AAA22713"/>
    </conflict>
</comment>
<comment type="sequence caution" evidence="4">
    <conflict type="erroneous initiation">
        <sequence resource="EMBL-CDS" id="AAA22715"/>
    </conflict>
</comment>
<comment type="sequence caution" evidence="4">
    <conflict type="erroneous initiation">
        <sequence resource="EMBL-CDS" id="BAA19310"/>
    </conflict>
</comment>
<accession>P06574</accession>
<feature type="initiator methionine" description="Removed" evidence="3">
    <location>
        <position position="1"/>
    </location>
</feature>
<feature type="chain" id="PRO_0000093939" description="RNA polymerase sigma-B factor">
    <location>
        <begin position="2"/>
        <end position="262"/>
    </location>
</feature>
<feature type="DNA-binding region" description="H-T-H motif" evidence="1">
    <location>
        <begin position="224"/>
        <end position="243"/>
    </location>
</feature>
<feature type="short sequence motif" description="Polymerase core binding">
    <location>
        <begin position="58"/>
        <end position="71"/>
    </location>
</feature>
<evidence type="ECO:0000250" key="1"/>
<evidence type="ECO:0000269" key="2">
    <source>
    </source>
</evidence>
<evidence type="ECO:0000269" key="3">
    <source>
    </source>
</evidence>
<evidence type="ECO:0000305" key="4"/>
<evidence type="ECO:0000305" key="5">
    <source>
    </source>
</evidence>
<sequence>MTQPSKTTKLTKDEVDRLISDYQTKQDEQAQETLVRVYTNLVDMLAKKYSKGKSFHEDLRQVGMIGLLGAIKRYDPVVGKSFEAFAIPTIIGEIKRFLRDKTWSVHVPRRIKELGPRIKMAVDQLTTETQRSPKVEEIAEFLDVSEEEVLETMEMGKSYQALSVDHSIEADSDGSTVTILDIVGSQEDGYERVNQQLMLQSVLHVLSDREKQIIDLTYIQNKSQKETGDILGISQMHVSRLQRKAVKKLREALIEDPSMELM</sequence>
<proteinExistence type="evidence at protein level"/>
<dbReference type="EMBL" id="M13927">
    <property type="protein sequence ID" value="AAA22754.1"/>
    <property type="molecule type" value="Genomic_DNA"/>
</dbReference>
<dbReference type="EMBL" id="M14508">
    <property type="protein sequence ID" value="AAA22715.1"/>
    <property type="status" value="ALT_INIT"/>
    <property type="molecule type" value="Genomic_DNA"/>
</dbReference>
<dbReference type="EMBL" id="M34995">
    <property type="protein sequence ID" value="AAA22713.1"/>
    <property type="status" value="ALT_INIT"/>
    <property type="molecule type" value="Genomic_DNA"/>
</dbReference>
<dbReference type="EMBL" id="AB001488">
    <property type="protein sequence ID" value="BAA19310.1"/>
    <property type="status" value="ALT_INIT"/>
    <property type="molecule type" value="Genomic_DNA"/>
</dbReference>
<dbReference type="EMBL" id="AL009126">
    <property type="protein sequence ID" value="CAB12280.2"/>
    <property type="molecule type" value="Genomic_DNA"/>
</dbReference>
<dbReference type="PIR" id="A27762">
    <property type="entry name" value="A25944"/>
</dbReference>
<dbReference type="RefSeq" id="NP_388354.2">
    <property type="nucleotide sequence ID" value="NC_000964.3"/>
</dbReference>
<dbReference type="RefSeq" id="WP_003246715.1">
    <property type="nucleotide sequence ID" value="NZ_OZ025638.1"/>
</dbReference>
<dbReference type="SMR" id="P06574"/>
<dbReference type="FunCoup" id="P06574">
    <property type="interactions" value="44"/>
</dbReference>
<dbReference type="IntAct" id="P06574">
    <property type="interactions" value="6"/>
</dbReference>
<dbReference type="STRING" id="224308.BSU04730"/>
<dbReference type="PaxDb" id="224308-BSU04730"/>
<dbReference type="EnsemblBacteria" id="CAB12280">
    <property type="protein sequence ID" value="CAB12280"/>
    <property type="gene ID" value="BSU_04730"/>
</dbReference>
<dbReference type="GeneID" id="939937"/>
<dbReference type="KEGG" id="bsu:BSU04730"/>
<dbReference type="PATRIC" id="fig|224308.179.peg.501"/>
<dbReference type="eggNOG" id="COG1191">
    <property type="taxonomic scope" value="Bacteria"/>
</dbReference>
<dbReference type="InParanoid" id="P06574"/>
<dbReference type="OrthoDB" id="9809557at2"/>
<dbReference type="PhylomeDB" id="P06574"/>
<dbReference type="BioCyc" id="BSUB:BSU04730-MONOMER"/>
<dbReference type="Proteomes" id="UP000001570">
    <property type="component" value="Chromosome"/>
</dbReference>
<dbReference type="GO" id="GO:0003677">
    <property type="term" value="F:DNA binding"/>
    <property type="evidence" value="ECO:0007669"/>
    <property type="project" value="UniProtKB-KW"/>
</dbReference>
<dbReference type="GO" id="GO:0016987">
    <property type="term" value="F:sigma factor activity"/>
    <property type="evidence" value="ECO:0000318"/>
    <property type="project" value="GO_Central"/>
</dbReference>
<dbReference type="GO" id="GO:0006352">
    <property type="term" value="P:DNA-templated transcription initiation"/>
    <property type="evidence" value="ECO:0007669"/>
    <property type="project" value="InterPro"/>
</dbReference>
<dbReference type="GO" id="GO:0006355">
    <property type="term" value="P:regulation of DNA-templated transcription"/>
    <property type="evidence" value="ECO:0000318"/>
    <property type="project" value="GO_Central"/>
</dbReference>
<dbReference type="CDD" id="cd06171">
    <property type="entry name" value="Sigma70_r4"/>
    <property type="match status" value="1"/>
</dbReference>
<dbReference type="FunFam" id="1.20.120.1810:FF:000005">
    <property type="entry name" value="RNA polymerase sigma factor SigB"/>
    <property type="match status" value="1"/>
</dbReference>
<dbReference type="Gene3D" id="1.20.120.1810">
    <property type="match status" value="1"/>
</dbReference>
<dbReference type="Gene3D" id="1.10.10.10">
    <property type="entry name" value="Winged helix-like DNA-binding domain superfamily/Winged helix DNA-binding domain"/>
    <property type="match status" value="2"/>
</dbReference>
<dbReference type="InterPro" id="IPR014284">
    <property type="entry name" value="RNA_pol_sigma-70_dom"/>
</dbReference>
<dbReference type="InterPro" id="IPR014288">
    <property type="entry name" value="RNA_pol_sigma-B"/>
</dbReference>
<dbReference type="InterPro" id="IPR014322">
    <property type="entry name" value="RNA_pol_sigma-B/F/G"/>
</dbReference>
<dbReference type="InterPro" id="IPR000943">
    <property type="entry name" value="RNA_pol_sigma70"/>
</dbReference>
<dbReference type="InterPro" id="IPR007627">
    <property type="entry name" value="RNA_pol_sigma70_r2"/>
</dbReference>
<dbReference type="InterPro" id="IPR007624">
    <property type="entry name" value="RNA_pol_sigma70_r3"/>
</dbReference>
<dbReference type="InterPro" id="IPR007630">
    <property type="entry name" value="RNA_pol_sigma70_r4"/>
</dbReference>
<dbReference type="InterPro" id="IPR013325">
    <property type="entry name" value="RNA_pol_sigma_r2"/>
</dbReference>
<dbReference type="InterPro" id="IPR013324">
    <property type="entry name" value="RNA_pol_sigma_r3/r4-like"/>
</dbReference>
<dbReference type="InterPro" id="IPR036388">
    <property type="entry name" value="WH-like_DNA-bd_sf"/>
</dbReference>
<dbReference type="NCBIfam" id="TIGR02980">
    <property type="entry name" value="SigBFG"/>
    <property type="match status" value="1"/>
</dbReference>
<dbReference type="NCBIfam" id="TIGR02937">
    <property type="entry name" value="sigma70-ECF"/>
    <property type="match status" value="1"/>
</dbReference>
<dbReference type="NCBIfam" id="TIGR02941">
    <property type="entry name" value="Sigma_B"/>
    <property type="match status" value="1"/>
</dbReference>
<dbReference type="PANTHER" id="PTHR30385:SF4">
    <property type="entry name" value="RNA POLYMERASE SIGMA-E FACTOR"/>
    <property type="match status" value="1"/>
</dbReference>
<dbReference type="PANTHER" id="PTHR30385">
    <property type="entry name" value="SIGMA FACTOR F FLAGELLAR"/>
    <property type="match status" value="1"/>
</dbReference>
<dbReference type="Pfam" id="PF04542">
    <property type="entry name" value="Sigma70_r2"/>
    <property type="match status" value="1"/>
</dbReference>
<dbReference type="Pfam" id="PF04539">
    <property type="entry name" value="Sigma70_r3"/>
    <property type="match status" value="1"/>
</dbReference>
<dbReference type="Pfam" id="PF04545">
    <property type="entry name" value="Sigma70_r4"/>
    <property type="match status" value="1"/>
</dbReference>
<dbReference type="PRINTS" id="PR00046">
    <property type="entry name" value="SIGMA70FCT"/>
</dbReference>
<dbReference type="SUPFAM" id="SSF88946">
    <property type="entry name" value="Sigma2 domain of RNA polymerase sigma factors"/>
    <property type="match status" value="1"/>
</dbReference>
<dbReference type="SUPFAM" id="SSF88659">
    <property type="entry name" value="Sigma3 and sigma4 domains of RNA polymerase sigma factors"/>
    <property type="match status" value="2"/>
</dbReference>
<dbReference type="PROSITE" id="PS00716">
    <property type="entry name" value="SIGMA70_2"/>
    <property type="match status" value="1"/>
</dbReference>
<gene>
    <name type="primary">sigB</name>
    <name type="synonym">rpoF</name>
    <name type="ordered locus">BSU04730</name>
</gene>
<protein>
    <recommendedName>
        <fullName>RNA polymerase sigma-B factor</fullName>
    </recommendedName>
    <alternativeName>
        <fullName>General stress protein 84</fullName>
        <shortName>GSP84</shortName>
    </alternativeName>
    <alternativeName>
        <fullName>Sigma-37</fullName>
    </alternativeName>
</protein>
<keyword id="KW-0903">Direct protein sequencing</keyword>
<keyword id="KW-0238">DNA-binding</keyword>
<keyword id="KW-1185">Reference proteome</keyword>
<keyword id="KW-0731">Sigma factor</keyword>
<keyword id="KW-0346">Stress response</keyword>
<keyword id="KW-0804">Transcription</keyword>
<keyword id="KW-0805">Transcription regulation</keyword>